<feature type="chain" id="PRO_0000237186" description="Large ribosomal subunit protein uL2">
    <location>
        <begin position="1"/>
        <end position="273"/>
    </location>
</feature>
<feature type="region of interest" description="Disordered" evidence="2">
    <location>
        <begin position="28"/>
        <end position="53"/>
    </location>
</feature>
<feature type="region of interest" description="Disordered" evidence="2">
    <location>
        <begin position="221"/>
        <end position="273"/>
    </location>
</feature>
<feature type="compositionally biased region" description="Low complexity" evidence="2">
    <location>
        <begin position="39"/>
        <end position="48"/>
    </location>
</feature>
<protein>
    <recommendedName>
        <fullName evidence="1">Large ribosomal subunit protein uL2</fullName>
    </recommendedName>
    <alternativeName>
        <fullName evidence="3">50S ribosomal protein L2</fullName>
    </alternativeName>
</protein>
<reference key="1">
    <citation type="journal article" date="2004" name="Proc. Natl. Acad. Sci. U.S.A.">
        <title>Genome sequence of the enterobacterial phytopathogen Erwinia carotovora subsp. atroseptica and characterization of virulence factors.</title>
        <authorList>
            <person name="Bell K.S."/>
            <person name="Sebaihia M."/>
            <person name="Pritchard L."/>
            <person name="Holden M.T.G."/>
            <person name="Hyman L.J."/>
            <person name="Holeva M.C."/>
            <person name="Thomson N.R."/>
            <person name="Bentley S.D."/>
            <person name="Churcher L.J.C."/>
            <person name="Mungall K."/>
            <person name="Atkin R."/>
            <person name="Bason N."/>
            <person name="Brooks K."/>
            <person name="Chillingworth T."/>
            <person name="Clark K."/>
            <person name="Doggett J."/>
            <person name="Fraser A."/>
            <person name="Hance Z."/>
            <person name="Hauser H."/>
            <person name="Jagels K."/>
            <person name="Moule S."/>
            <person name="Norbertczak H."/>
            <person name="Ormond D."/>
            <person name="Price C."/>
            <person name="Quail M.A."/>
            <person name="Sanders M."/>
            <person name="Walker D."/>
            <person name="Whitehead S."/>
            <person name="Salmond G.P.C."/>
            <person name="Birch P.R.J."/>
            <person name="Parkhill J."/>
            <person name="Toth I.K."/>
        </authorList>
    </citation>
    <scope>NUCLEOTIDE SEQUENCE [LARGE SCALE GENOMIC DNA]</scope>
    <source>
        <strain>SCRI 1043 / ATCC BAA-672</strain>
    </source>
</reference>
<comment type="function">
    <text evidence="1">One of the primary rRNA binding proteins. Required for association of the 30S and 50S subunits to form the 70S ribosome, for tRNA binding and peptide bond formation. It has been suggested to have peptidyltransferase activity; this is somewhat controversial. Makes several contacts with the 16S rRNA in the 70S ribosome.</text>
</comment>
<comment type="subunit">
    <text evidence="1">Part of the 50S ribosomal subunit. Forms a bridge to the 30S subunit in the 70S ribosome.</text>
</comment>
<comment type="similarity">
    <text evidence="1">Belongs to the universal ribosomal protein uL2 family.</text>
</comment>
<accession>Q6CZX3</accession>
<gene>
    <name evidence="1" type="primary">rplB</name>
    <name type="ordered locus">ECA4028</name>
</gene>
<name>RL2_PECAS</name>
<organism>
    <name type="scientific">Pectobacterium atrosepticum (strain SCRI 1043 / ATCC BAA-672)</name>
    <name type="common">Erwinia carotovora subsp. atroseptica</name>
    <dbReference type="NCBI Taxonomy" id="218491"/>
    <lineage>
        <taxon>Bacteria</taxon>
        <taxon>Pseudomonadati</taxon>
        <taxon>Pseudomonadota</taxon>
        <taxon>Gammaproteobacteria</taxon>
        <taxon>Enterobacterales</taxon>
        <taxon>Pectobacteriaceae</taxon>
        <taxon>Pectobacterium</taxon>
    </lineage>
</organism>
<dbReference type="EMBL" id="BX950851">
    <property type="protein sequence ID" value="CAG76925.1"/>
    <property type="molecule type" value="Genomic_DNA"/>
</dbReference>
<dbReference type="RefSeq" id="WP_011095508.1">
    <property type="nucleotide sequence ID" value="NC_004547.2"/>
</dbReference>
<dbReference type="SMR" id="Q6CZX3"/>
<dbReference type="STRING" id="218491.ECA4028"/>
<dbReference type="GeneID" id="57210692"/>
<dbReference type="KEGG" id="eca:ECA4028"/>
<dbReference type="PATRIC" id="fig|218491.5.peg.4094"/>
<dbReference type="eggNOG" id="COG0090">
    <property type="taxonomic scope" value="Bacteria"/>
</dbReference>
<dbReference type="HOGENOM" id="CLU_036235_2_1_6"/>
<dbReference type="OrthoDB" id="9778722at2"/>
<dbReference type="Proteomes" id="UP000007966">
    <property type="component" value="Chromosome"/>
</dbReference>
<dbReference type="GO" id="GO:0015934">
    <property type="term" value="C:large ribosomal subunit"/>
    <property type="evidence" value="ECO:0007669"/>
    <property type="project" value="InterPro"/>
</dbReference>
<dbReference type="GO" id="GO:0019843">
    <property type="term" value="F:rRNA binding"/>
    <property type="evidence" value="ECO:0007669"/>
    <property type="project" value="UniProtKB-UniRule"/>
</dbReference>
<dbReference type="GO" id="GO:0003735">
    <property type="term" value="F:structural constituent of ribosome"/>
    <property type="evidence" value="ECO:0007669"/>
    <property type="project" value="InterPro"/>
</dbReference>
<dbReference type="GO" id="GO:0016740">
    <property type="term" value="F:transferase activity"/>
    <property type="evidence" value="ECO:0007669"/>
    <property type="project" value="InterPro"/>
</dbReference>
<dbReference type="GO" id="GO:0002181">
    <property type="term" value="P:cytoplasmic translation"/>
    <property type="evidence" value="ECO:0007669"/>
    <property type="project" value="TreeGrafter"/>
</dbReference>
<dbReference type="FunFam" id="2.30.30.30:FF:000001">
    <property type="entry name" value="50S ribosomal protein L2"/>
    <property type="match status" value="1"/>
</dbReference>
<dbReference type="FunFam" id="2.40.50.140:FF:000003">
    <property type="entry name" value="50S ribosomal protein L2"/>
    <property type="match status" value="1"/>
</dbReference>
<dbReference type="FunFam" id="4.10.950.10:FF:000001">
    <property type="entry name" value="50S ribosomal protein L2"/>
    <property type="match status" value="1"/>
</dbReference>
<dbReference type="Gene3D" id="2.30.30.30">
    <property type="match status" value="1"/>
</dbReference>
<dbReference type="Gene3D" id="2.40.50.140">
    <property type="entry name" value="Nucleic acid-binding proteins"/>
    <property type="match status" value="1"/>
</dbReference>
<dbReference type="Gene3D" id="4.10.950.10">
    <property type="entry name" value="Ribosomal protein L2, domain 3"/>
    <property type="match status" value="1"/>
</dbReference>
<dbReference type="HAMAP" id="MF_01320_B">
    <property type="entry name" value="Ribosomal_uL2_B"/>
    <property type="match status" value="1"/>
</dbReference>
<dbReference type="InterPro" id="IPR012340">
    <property type="entry name" value="NA-bd_OB-fold"/>
</dbReference>
<dbReference type="InterPro" id="IPR014722">
    <property type="entry name" value="Rib_uL2_dom2"/>
</dbReference>
<dbReference type="InterPro" id="IPR002171">
    <property type="entry name" value="Ribosomal_uL2"/>
</dbReference>
<dbReference type="InterPro" id="IPR005880">
    <property type="entry name" value="Ribosomal_uL2_bac/org-type"/>
</dbReference>
<dbReference type="InterPro" id="IPR022669">
    <property type="entry name" value="Ribosomal_uL2_C"/>
</dbReference>
<dbReference type="InterPro" id="IPR022671">
    <property type="entry name" value="Ribosomal_uL2_CS"/>
</dbReference>
<dbReference type="InterPro" id="IPR014726">
    <property type="entry name" value="Ribosomal_uL2_dom3"/>
</dbReference>
<dbReference type="InterPro" id="IPR022666">
    <property type="entry name" value="Ribosomal_uL2_RNA-bd_dom"/>
</dbReference>
<dbReference type="InterPro" id="IPR008991">
    <property type="entry name" value="Translation_prot_SH3-like_sf"/>
</dbReference>
<dbReference type="NCBIfam" id="TIGR01171">
    <property type="entry name" value="rplB_bact"/>
    <property type="match status" value="1"/>
</dbReference>
<dbReference type="PANTHER" id="PTHR13691:SF5">
    <property type="entry name" value="LARGE RIBOSOMAL SUBUNIT PROTEIN UL2M"/>
    <property type="match status" value="1"/>
</dbReference>
<dbReference type="PANTHER" id="PTHR13691">
    <property type="entry name" value="RIBOSOMAL PROTEIN L2"/>
    <property type="match status" value="1"/>
</dbReference>
<dbReference type="Pfam" id="PF00181">
    <property type="entry name" value="Ribosomal_L2"/>
    <property type="match status" value="1"/>
</dbReference>
<dbReference type="Pfam" id="PF03947">
    <property type="entry name" value="Ribosomal_L2_C"/>
    <property type="match status" value="1"/>
</dbReference>
<dbReference type="PIRSF" id="PIRSF002158">
    <property type="entry name" value="Ribosomal_L2"/>
    <property type="match status" value="1"/>
</dbReference>
<dbReference type="SMART" id="SM01383">
    <property type="entry name" value="Ribosomal_L2"/>
    <property type="match status" value="1"/>
</dbReference>
<dbReference type="SMART" id="SM01382">
    <property type="entry name" value="Ribosomal_L2_C"/>
    <property type="match status" value="1"/>
</dbReference>
<dbReference type="SUPFAM" id="SSF50249">
    <property type="entry name" value="Nucleic acid-binding proteins"/>
    <property type="match status" value="1"/>
</dbReference>
<dbReference type="SUPFAM" id="SSF50104">
    <property type="entry name" value="Translation proteins SH3-like domain"/>
    <property type="match status" value="1"/>
</dbReference>
<dbReference type="PROSITE" id="PS00467">
    <property type="entry name" value="RIBOSOMAL_L2"/>
    <property type="match status" value="1"/>
</dbReference>
<sequence length="273" mass="29894">MAIVKCKPTSPGRRHVVKVVNPELHKGKPFAPLVEKNSKSGGRNNNGRITTRHIGGGHKQAYRIVDFKRNKDGIPAVVERLEYDPNRSANIALVLYKDGERRYILAPKGLKAGDQIQSGVDAAIKAGNTLPMRNIPVGSTVHNVEMKPGKGGQLARSAGTYVQIVARDGSYVTLRLRSGEMRKVESDCRATLGEVGNAEHMLRVLGKAGAARWRGIRPTVRGTAMNPVDHPHGGGEGRNFGKHPVSPWGLQTKGKKTRSNKRTDKFIVRRRTK</sequence>
<evidence type="ECO:0000255" key="1">
    <source>
        <dbReference type="HAMAP-Rule" id="MF_01320"/>
    </source>
</evidence>
<evidence type="ECO:0000256" key="2">
    <source>
        <dbReference type="SAM" id="MobiDB-lite"/>
    </source>
</evidence>
<evidence type="ECO:0000305" key="3"/>
<keyword id="KW-1185">Reference proteome</keyword>
<keyword id="KW-0687">Ribonucleoprotein</keyword>
<keyword id="KW-0689">Ribosomal protein</keyword>
<keyword id="KW-0694">RNA-binding</keyword>
<keyword id="KW-0699">rRNA-binding</keyword>
<proteinExistence type="inferred from homology"/>